<accession>Q96G03</accession>
<accession>B4E0G8</accession>
<accession>Q53FP5</accession>
<accession>Q5QTR0</accession>
<accession>Q9H0P9</accession>
<accession>Q9NV22</accession>
<sequence length="612" mass="68283">MAAPEGSGLGEDARLDQETAQWLRWDKNSLTLEAVKRLIAEGNKEELRKCFGARMEFGTAGLRAAMGPGISRMNDLTIIQTTQGFCRYLEKQFSDLKQKGIVISFDARAHPSSGGSSRRFARLAATTFISQGIPVYLFSDITPTPFVPFTVSHLKLCAGIMITASHNPKQDNGYKVYWDNGAQIISPHDKGISQAIEENLEPWPQAWDDSLIDSSPLLHNPSASINNDYFEDLKKYCFHRSVNRETKVKFVHTSVHGVGHSFVQSAFKAFDLVPPEAVPEQKDPDPEFPTVKYPNPEEGKGVLTLSFALADKTKARIVLANDPDADRLAVAEKQDSGEWRVFSGNELGALLGWWLFTSWKEKNQDRSALKDTYMLSSTVSSKILRAIALKEGFHFEETLTGFKWMGNRAKQLIDQGKTVLFAFEEAIGYMCCPFVLDKDGVSAAVISAELASFLATKNLSLSQQLKAIYVEYGYHITKASYFICHDQETIKKLFENLRNYDGKNNYPKACGKFEISAIRDLTTGYDDSQPDKKAVLPTSKSSQMITFTFANGGVATMRTSGTEPKIKYYAELCAPPGNSDPEQLKKELNELVSAIEEHFFQPQKYNLQPKAD</sequence>
<reference key="1">
    <citation type="journal article" date="2001" name="Genome Res.">
        <title>Towards a catalog of human genes and proteins: sequencing and analysis of 500 novel complete protein coding human cDNAs.</title>
        <authorList>
            <person name="Wiemann S."/>
            <person name="Weil B."/>
            <person name="Wellenreuther R."/>
            <person name="Gassenhuber J."/>
            <person name="Glassl S."/>
            <person name="Ansorge W."/>
            <person name="Boecher M."/>
            <person name="Bloecker H."/>
            <person name="Bauersachs S."/>
            <person name="Blum H."/>
            <person name="Lauber J."/>
            <person name="Duesterhoeft A."/>
            <person name="Beyer A."/>
            <person name="Koehrer K."/>
            <person name="Strack N."/>
            <person name="Mewes H.-W."/>
            <person name="Ottenwaelder B."/>
            <person name="Obermaier B."/>
            <person name="Tampe J."/>
            <person name="Heubner D."/>
            <person name="Wambutt R."/>
            <person name="Korn B."/>
            <person name="Klein M."/>
            <person name="Poustka A."/>
        </authorList>
    </citation>
    <scope>NUCLEOTIDE SEQUENCE [LARGE SCALE MRNA] (ISOFORM 1)</scope>
    <source>
        <tissue>Kidney</tissue>
    </source>
</reference>
<reference key="2">
    <citation type="submission" date="1998-11" db="EMBL/GenBank/DDBJ databases">
        <authorList>
            <person name="Hui R.T."/>
            <person name="Liu Y.Q."/>
            <person name="Liu B."/>
            <person name="Zhao B."/>
            <person name="Meng X.M."/>
            <person name="Sheng H."/>
            <person name="Xu Y.Y."/>
            <person name="Wang X.Y."/>
            <person name="Ye J."/>
            <person name="Song L."/>
            <person name="Gao Y."/>
            <person name="Wei Y.J."/>
            <person name="Zhang C.L."/>
            <person name="Zhang J."/>
            <person name="Chai M.Q."/>
            <person name="Chen J.Z."/>
            <person name="Sun Y.H."/>
            <person name="Zhou X.L."/>
            <person name="Jiang Y.X."/>
            <person name="Zhao X.W."/>
            <person name="Liu S."/>
            <person name="Cao H.Q."/>
            <person name="Zhao Y."/>
            <person name="Liu D.Q."/>
            <person name="Ding J.F."/>
            <person name="Liu L.S."/>
            <person name="Gao R.L."/>
            <person name="Wu Q.Y."/>
            <person name="Qiang B.Q."/>
            <person name="Yuan J.G."/>
            <person name="Liew C.C."/>
            <person name="Zhao M.S."/>
        </authorList>
    </citation>
    <scope>NUCLEOTIDE SEQUENCE [LARGE SCALE MRNA] (ISOFORM 1)</scope>
    <source>
        <tissue>Aorta</tissue>
    </source>
</reference>
<reference key="3">
    <citation type="journal article" date="2004" name="Nat. Genet.">
        <title>Complete sequencing and characterization of 21,243 full-length human cDNAs.</title>
        <authorList>
            <person name="Ota T."/>
            <person name="Suzuki Y."/>
            <person name="Nishikawa T."/>
            <person name="Otsuki T."/>
            <person name="Sugiyama T."/>
            <person name="Irie R."/>
            <person name="Wakamatsu A."/>
            <person name="Hayashi K."/>
            <person name="Sato H."/>
            <person name="Nagai K."/>
            <person name="Kimura K."/>
            <person name="Makita H."/>
            <person name="Sekine M."/>
            <person name="Obayashi M."/>
            <person name="Nishi T."/>
            <person name="Shibahara T."/>
            <person name="Tanaka T."/>
            <person name="Ishii S."/>
            <person name="Yamamoto J."/>
            <person name="Saito K."/>
            <person name="Kawai Y."/>
            <person name="Isono Y."/>
            <person name="Nakamura Y."/>
            <person name="Nagahari K."/>
            <person name="Murakami K."/>
            <person name="Yasuda T."/>
            <person name="Iwayanagi T."/>
            <person name="Wagatsuma M."/>
            <person name="Shiratori A."/>
            <person name="Sudo H."/>
            <person name="Hosoiri T."/>
            <person name="Kaku Y."/>
            <person name="Kodaira H."/>
            <person name="Kondo H."/>
            <person name="Sugawara M."/>
            <person name="Takahashi M."/>
            <person name="Kanda K."/>
            <person name="Yokoi T."/>
            <person name="Furuya T."/>
            <person name="Kikkawa E."/>
            <person name="Omura Y."/>
            <person name="Abe K."/>
            <person name="Kamihara K."/>
            <person name="Katsuta N."/>
            <person name="Sato K."/>
            <person name="Tanikawa M."/>
            <person name="Yamazaki M."/>
            <person name="Ninomiya K."/>
            <person name="Ishibashi T."/>
            <person name="Yamashita H."/>
            <person name="Murakawa K."/>
            <person name="Fujimori K."/>
            <person name="Tanai H."/>
            <person name="Kimata M."/>
            <person name="Watanabe M."/>
            <person name="Hiraoka S."/>
            <person name="Chiba Y."/>
            <person name="Ishida S."/>
            <person name="Ono Y."/>
            <person name="Takiguchi S."/>
            <person name="Watanabe S."/>
            <person name="Yosida M."/>
            <person name="Hotuta T."/>
            <person name="Kusano J."/>
            <person name="Kanehori K."/>
            <person name="Takahashi-Fujii A."/>
            <person name="Hara H."/>
            <person name="Tanase T.-O."/>
            <person name="Nomura Y."/>
            <person name="Togiya S."/>
            <person name="Komai F."/>
            <person name="Hara R."/>
            <person name="Takeuchi K."/>
            <person name="Arita M."/>
            <person name="Imose N."/>
            <person name="Musashino K."/>
            <person name="Yuuki H."/>
            <person name="Oshima A."/>
            <person name="Sasaki N."/>
            <person name="Aotsuka S."/>
            <person name="Yoshikawa Y."/>
            <person name="Matsunawa H."/>
            <person name="Ichihara T."/>
            <person name="Shiohata N."/>
            <person name="Sano S."/>
            <person name="Moriya S."/>
            <person name="Momiyama H."/>
            <person name="Satoh N."/>
            <person name="Takami S."/>
            <person name="Terashima Y."/>
            <person name="Suzuki O."/>
            <person name="Nakagawa S."/>
            <person name="Senoh A."/>
            <person name="Mizoguchi H."/>
            <person name="Goto Y."/>
            <person name="Shimizu F."/>
            <person name="Wakebe H."/>
            <person name="Hishigaki H."/>
            <person name="Watanabe T."/>
            <person name="Sugiyama A."/>
            <person name="Takemoto M."/>
            <person name="Kawakami B."/>
            <person name="Yamazaki M."/>
            <person name="Watanabe K."/>
            <person name="Kumagai A."/>
            <person name="Itakura S."/>
            <person name="Fukuzumi Y."/>
            <person name="Fujimori Y."/>
            <person name="Komiyama M."/>
            <person name="Tashiro H."/>
            <person name="Tanigami A."/>
            <person name="Fujiwara T."/>
            <person name="Ono T."/>
            <person name="Yamada K."/>
            <person name="Fujii Y."/>
            <person name="Ozaki K."/>
            <person name="Hirao M."/>
            <person name="Ohmori Y."/>
            <person name="Kawabata A."/>
            <person name="Hikiji T."/>
            <person name="Kobatake N."/>
            <person name="Inagaki H."/>
            <person name="Ikema Y."/>
            <person name="Okamoto S."/>
            <person name="Okitani R."/>
            <person name="Kawakami T."/>
            <person name="Noguchi S."/>
            <person name="Itoh T."/>
            <person name="Shigeta K."/>
            <person name="Senba T."/>
            <person name="Matsumura K."/>
            <person name="Nakajima Y."/>
            <person name="Mizuno T."/>
            <person name="Morinaga M."/>
            <person name="Sasaki M."/>
            <person name="Togashi T."/>
            <person name="Oyama M."/>
            <person name="Hata H."/>
            <person name="Watanabe M."/>
            <person name="Komatsu T."/>
            <person name="Mizushima-Sugano J."/>
            <person name="Satoh T."/>
            <person name="Shirai Y."/>
            <person name="Takahashi Y."/>
            <person name="Nakagawa K."/>
            <person name="Okumura K."/>
            <person name="Nagase T."/>
            <person name="Nomura N."/>
            <person name="Kikuchi H."/>
            <person name="Masuho Y."/>
            <person name="Yamashita R."/>
            <person name="Nakai K."/>
            <person name="Yada T."/>
            <person name="Nakamura Y."/>
            <person name="Ohara O."/>
            <person name="Isogai T."/>
            <person name="Sugano S."/>
        </authorList>
    </citation>
    <scope>NUCLEOTIDE SEQUENCE [LARGE SCALE MRNA] (ISOFORMS 1 AND 2)</scope>
    <source>
        <tissue>Thymus</tissue>
    </source>
</reference>
<reference key="4">
    <citation type="submission" date="2004-06" db="EMBL/GenBank/DDBJ databases">
        <title>Cloning of human full open reading frames in Gateway(TM) system entry vector (pDONR201).</title>
        <authorList>
            <person name="Ebert L."/>
            <person name="Schick M."/>
            <person name="Neubert P."/>
            <person name="Schatten R."/>
            <person name="Henze S."/>
            <person name="Korn B."/>
        </authorList>
    </citation>
    <scope>NUCLEOTIDE SEQUENCE [LARGE SCALE MRNA] (ISOFORM 1)</scope>
    <scope>VARIANT ASP-10</scope>
</reference>
<reference key="5">
    <citation type="submission" date="2005-04" db="EMBL/GenBank/DDBJ databases">
        <authorList>
            <person name="Suzuki Y."/>
            <person name="Sugano S."/>
            <person name="Totoki Y."/>
            <person name="Toyoda A."/>
            <person name="Takeda T."/>
            <person name="Sakaki Y."/>
            <person name="Tanaka A."/>
            <person name="Yokoyama S."/>
        </authorList>
    </citation>
    <scope>NUCLEOTIDE SEQUENCE [LARGE SCALE MRNA] (ISOFORM 1)</scope>
    <source>
        <tissue>Gastric mucosa</tissue>
    </source>
</reference>
<reference key="6">
    <citation type="journal article" date="2005" name="Nature">
        <title>Generation and annotation of the DNA sequences of human chromosomes 2 and 4.</title>
        <authorList>
            <person name="Hillier L.W."/>
            <person name="Graves T.A."/>
            <person name="Fulton R.S."/>
            <person name="Fulton L.A."/>
            <person name="Pepin K.H."/>
            <person name="Minx P."/>
            <person name="Wagner-McPherson C."/>
            <person name="Layman D."/>
            <person name="Wylie K."/>
            <person name="Sekhon M."/>
            <person name="Becker M.C."/>
            <person name="Fewell G.A."/>
            <person name="Delehaunty K.D."/>
            <person name="Miner T.L."/>
            <person name="Nash W.E."/>
            <person name="Kremitzki C."/>
            <person name="Oddy L."/>
            <person name="Du H."/>
            <person name="Sun H."/>
            <person name="Bradshaw-Cordum H."/>
            <person name="Ali J."/>
            <person name="Carter J."/>
            <person name="Cordes M."/>
            <person name="Harris A."/>
            <person name="Isak A."/>
            <person name="van Brunt A."/>
            <person name="Nguyen C."/>
            <person name="Du F."/>
            <person name="Courtney L."/>
            <person name="Kalicki J."/>
            <person name="Ozersky P."/>
            <person name="Abbott S."/>
            <person name="Armstrong J."/>
            <person name="Belter E.A."/>
            <person name="Caruso L."/>
            <person name="Cedroni M."/>
            <person name="Cotton M."/>
            <person name="Davidson T."/>
            <person name="Desai A."/>
            <person name="Elliott G."/>
            <person name="Erb T."/>
            <person name="Fronick C."/>
            <person name="Gaige T."/>
            <person name="Haakenson W."/>
            <person name="Haglund K."/>
            <person name="Holmes A."/>
            <person name="Harkins R."/>
            <person name="Kim K."/>
            <person name="Kruchowski S.S."/>
            <person name="Strong C.M."/>
            <person name="Grewal N."/>
            <person name="Goyea E."/>
            <person name="Hou S."/>
            <person name="Levy A."/>
            <person name="Martinka S."/>
            <person name="Mead K."/>
            <person name="McLellan M.D."/>
            <person name="Meyer R."/>
            <person name="Randall-Maher J."/>
            <person name="Tomlinson C."/>
            <person name="Dauphin-Kohlberg S."/>
            <person name="Kozlowicz-Reilly A."/>
            <person name="Shah N."/>
            <person name="Swearengen-Shahid S."/>
            <person name="Snider J."/>
            <person name="Strong J.T."/>
            <person name="Thompson J."/>
            <person name="Yoakum M."/>
            <person name="Leonard S."/>
            <person name="Pearman C."/>
            <person name="Trani L."/>
            <person name="Radionenko M."/>
            <person name="Waligorski J.E."/>
            <person name="Wang C."/>
            <person name="Rock S.M."/>
            <person name="Tin-Wollam A.-M."/>
            <person name="Maupin R."/>
            <person name="Latreille P."/>
            <person name="Wendl M.C."/>
            <person name="Yang S.-P."/>
            <person name="Pohl C."/>
            <person name="Wallis J.W."/>
            <person name="Spieth J."/>
            <person name="Bieri T.A."/>
            <person name="Berkowicz N."/>
            <person name="Nelson J.O."/>
            <person name="Osborne J."/>
            <person name="Ding L."/>
            <person name="Meyer R."/>
            <person name="Sabo A."/>
            <person name="Shotland Y."/>
            <person name="Sinha P."/>
            <person name="Wohldmann P.E."/>
            <person name="Cook L.L."/>
            <person name="Hickenbotham M.T."/>
            <person name="Eldred J."/>
            <person name="Williams D."/>
            <person name="Jones T.A."/>
            <person name="She X."/>
            <person name="Ciccarelli F.D."/>
            <person name="Izaurralde E."/>
            <person name="Taylor J."/>
            <person name="Schmutz J."/>
            <person name="Myers R.M."/>
            <person name="Cox D.R."/>
            <person name="Huang X."/>
            <person name="McPherson J.D."/>
            <person name="Mardis E.R."/>
            <person name="Clifton S.W."/>
            <person name="Warren W.C."/>
            <person name="Chinwalla A.T."/>
            <person name="Eddy S.R."/>
            <person name="Marra M.A."/>
            <person name="Ovcharenko I."/>
            <person name="Furey T.S."/>
            <person name="Miller W."/>
            <person name="Eichler E.E."/>
            <person name="Bork P."/>
            <person name="Suyama M."/>
            <person name="Torrents D."/>
            <person name="Waterston R.H."/>
            <person name="Wilson R.K."/>
        </authorList>
    </citation>
    <scope>NUCLEOTIDE SEQUENCE [LARGE SCALE GENOMIC DNA]</scope>
</reference>
<reference key="7">
    <citation type="journal article" date="2004" name="Genome Res.">
        <title>The status, quality, and expansion of the NIH full-length cDNA project: the Mammalian Gene Collection (MGC).</title>
        <authorList>
            <consortium name="The MGC Project Team"/>
        </authorList>
    </citation>
    <scope>NUCLEOTIDE SEQUENCE [LARGE SCALE MRNA] (ISOFORM 1)</scope>
    <scope>VARIANT ASP-10</scope>
    <source>
        <tissue>Muscle</tissue>
    </source>
</reference>
<reference key="8">
    <citation type="journal article" date="2003" name="Nat. Biotechnol.">
        <title>Exploring proteomes and analyzing protein processing by mass spectrometric identification of sorted N-terminal peptides.</title>
        <authorList>
            <person name="Gevaert K."/>
            <person name="Goethals M."/>
            <person name="Martens L."/>
            <person name="Van Damme J."/>
            <person name="Staes A."/>
            <person name="Thomas G.R."/>
            <person name="Vandekerckhove J."/>
        </authorList>
    </citation>
    <scope>PROTEIN SEQUENCE OF 2-14</scope>
    <scope>ACETYLATION AT ALA-2</scope>
    <source>
        <tissue>Platelet</tissue>
    </source>
</reference>
<reference key="9">
    <citation type="journal article" date="2007" name="J. Biol. Chem.">
        <title>Molecular identification of mammalian phosphopentomutase and glucose-1,6-bisphosphate synthase, two members of the alpha-D-phosphohexomutase family.</title>
        <authorList>
            <person name="Maliekal P."/>
            <person name="Sokolova T."/>
            <person name="Vertommen D."/>
            <person name="Veiga-da-Cunha M."/>
            <person name="Van Schaftingen E."/>
        </authorList>
    </citation>
    <scope>IDENTIFICATION BY MASS SPECTROMETRY</scope>
    <scope>FUNCTION</scope>
    <scope>CATALYTIC ACTIVITY</scope>
    <scope>ACTIVITY REGULATION</scope>
    <scope>BIOPHYSICOCHEMICAL PROPERTIES</scope>
    <scope>SUBCELLULAR LOCATION</scope>
</reference>
<reference key="10">
    <citation type="journal article" date="2008" name="J. Biol. Chem.">
        <title>Mammalian phosphomannomutase PMM1 is the brain IMP-sensitive glucose-1,6-bisphosphatase.</title>
        <authorList>
            <person name="Veiga-da-Cunha M."/>
            <person name="Vleugels W."/>
            <person name="Maliekal P."/>
            <person name="Matthijs G."/>
            <person name="Van Schaftingen E."/>
        </authorList>
    </citation>
    <scope>FUNCTION</scope>
</reference>
<reference key="11">
    <citation type="journal article" date="2008" name="Proc. Natl. Acad. Sci. U.S.A.">
        <title>A quantitative atlas of mitotic phosphorylation.</title>
        <authorList>
            <person name="Dephoure N."/>
            <person name="Zhou C."/>
            <person name="Villen J."/>
            <person name="Beausoleil S.A."/>
            <person name="Bakalarski C.E."/>
            <person name="Elledge S.J."/>
            <person name="Gygi S.P."/>
        </authorList>
    </citation>
    <scope>PHOSPHORYLATION [LARGE SCALE ANALYSIS] AT SER-165</scope>
    <scope>IDENTIFICATION BY MASS SPECTROMETRY [LARGE SCALE ANALYSIS]</scope>
    <source>
        <tissue>Cervix carcinoma</tissue>
    </source>
</reference>
<reference key="12">
    <citation type="journal article" date="2009" name="Anal. Chem.">
        <title>Lys-N and trypsin cover complementary parts of the phosphoproteome in a refined SCX-based approach.</title>
        <authorList>
            <person name="Gauci S."/>
            <person name="Helbig A.O."/>
            <person name="Slijper M."/>
            <person name="Krijgsveld J."/>
            <person name="Heck A.J."/>
            <person name="Mohammed S."/>
        </authorList>
    </citation>
    <scope>ACETYLATION [LARGE SCALE ANALYSIS] AT ALA-2</scope>
    <scope>CLEAVAGE OF INITIATOR METHIONINE [LARGE SCALE ANALYSIS]</scope>
    <scope>IDENTIFICATION BY MASS SPECTROMETRY [LARGE SCALE ANALYSIS]</scope>
</reference>
<reference key="13">
    <citation type="journal article" date="2010" name="Sci. Signal.">
        <title>Quantitative phosphoproteomics reveals widespread full phosphorylation site occupancy during mitosis.</title>
        <authorList>
            <person name="Olsen J.V."/>
            <person name="Vermeulen M."/>
            <person name="Santamaria A."/>
            <person name="Kumar C."/>
            <person name="Miller M.L."/>
            <person name="Jensen L.J."/>
            <person name="Gnad F."/>
            <person name="Cox J."/>
            <person name="Jensen T.S."/>
            <person name="Nigg E.A."/>
            <person name="Brunak S."/>
            <person name="Mann M."/>
        </authorList>
    </citation>
    <scope>IDENTIFICATION BY MASS SPECTROMETRY [LARGE SCALE ANALYSIS]</scope>
    <source>
        <tissue>Cervix carcinoma</tissue>
    </source>
</reference>
<reference key="14">
    <citation type="journal article" date="2011" name="BMC Syst. Biol.">
        <title>Initial characterization of the human central proteome.</title>
        <authorList>
            <person name="Burkard T.R."/>
            <person name="Planyavsky M."/>
            <person name="Kaupe I."/>
            <person name="Breitwieser F.P."/>
            <person name="Buerckstuemmer T."/>
            <person name="Bennett K.L."/>
            <person name="Superti-Furga G."/>
            <person name="Colinge J."/>
        </authorList>
    </citation>
    <scope>IDENTIFICATION BY MASS SPECTROMETRY [LARGE SCALE ANALYSIS]</scope>
</reference>
<reference key="15">
    <citation type="journal article" date="2012" name="Mol. Cell. Proteomics">
        <title>Comparative large-scale characterisation of plant vs. mammal proteins reveals similar and idiosyncratic N-alpha acetylation features.</title>
        <authorList>
            <person name="Bienvenut W.V."/>
            <person name="Sumpton D."/>
            <person name="Martinez A."/>
            <person name="Lilla S."/>
            <person name="Espagne C."/>
            <person name="Meinnel T."/>
            <person name="Giglione C."/>
        </authorList>
    </citation>
    <scope>ACETYLATION [LARGE SCALE ANALYSIS] AT ALA-2</scope>
    <scope>CLEAVAGE OF INITIATOR METHIONINE [LARGE SCALE ANALYSIS]</scope>
    <scope>IDENTIFICATION BY MASS SPECTROMETRY [LARGE SCALE ANALYSIS]</scope>
</reference>
<reference key="16">
    <citation type="journal article" date="2012" name="Proc. Natl. Acad. Sci. U.S.A.">
        <title>N-terminal acetylome analyses and functional insights of the N-terminal acetyltransferase NatB.</title>
        <authorList>
            <person name="Van Damme P."/>
            <person name="Lasa M."/>
            <person name="Polevoda B."/>
            <person name="Gazquez C."/>
            <person name="Elosegui-Artola A."/>
            <person name="Kim D.S."/>
            <person name="De Juan-Pardo E."/>
            <person name="Demeyer K."/>
            <person name="Hole K."/>
            <person name="Larrea E."/>
            <person name="Timmerman E."/>
            <person name="Prieto J."/>
            <person name="Arnesen T."/>
            <person name="Sherman F."/>
            <person name="Gevaert K."/>
            <person name="Aldabe R."/>
        </authorList>
    </citation>
    <scope>ACETYLATION [LARGE SCALE ANALYSIS] AT ALA-2</scope>
    <scope>CLEAVAGE OF INITIATOR METHIONINE [LARGE SCALE ANALYSIS]</scope>
    <scope>IDENTIFICATION BY MASS SPECTROMETRY [LARGE SCALE ANALYSIS]</scope>
</reference>
<reference key="17">
    <citation type="journal article" date="2013" name="J. Proteome Res.">
        <title>Toward a comprehensive characterization of a human cancer cell phosphoproteome.</title>
        <authorList>
            <person name="Zhou H."/>
            <person name="Di Palma S."/>
            <person name="Preisinger C."/>
            <person name="Peng M."/>
            <person name="Polat A.N."/>
            <person name="Heck A.J."/>
            <person name="Mohammed S."/>
        </authorList>
    </citation>
    <scope>PHOSPHORYLATION [LARGE SCALE ANALYSIS] AT SER-165</scope>
    <scope>IDENTIFICATION BY MASS SPECTROMETRY [LARGE SCALE ANALYSIS]</scope>
    <source>
        <tissue>Cervix carcinoma</tissue>
        <tissue>Erythroleukemia</tissue>
    </source>
</reference>
<reference key="18">
    <citation type="journal article" date="2014" name="J. Proteomics">
        <title>An enzyme assisted RP-RPLC approach for in-depth analysis of human liver phosphoproteome.</title>
        <authorList>
            <person name="Bian Y."/>
            <person name="Song C."/>
            <person name="Cheng K."/>
            <person name="Dong M."/>
            <person name="Wang F."/>
            <person name="Huang J."/>
            <person name="Sun D."/>
            <person name="Wang L."/>
            <person name="Ye M."/>
            <person name="Zou H."/>
        </authorList>
    </citation>
    <scope>PHOSPHORYLATION [LARGE SCALE ANALYSIS] AT SER-165</scope>
    <scope>IDENTIFICATION BY MASS SPECTROMETRY [LARGE SCALE ANALYSIS]</scope>
    <source>
        <tissue>Liver</tissue>
    </source>
</reference>
<comment type="function">
    <text evidence="4 5">Catalyzes the conversion of the nucleoside breakdown products ribose-1-phosphate and deoxyribose-1-phosphate to the corresponding 5-phosphopentoses (PubMed:17804405). Catalyzes the reversible isomerization of alpha-D-glucose 1-phosphate to alpha-D-glucose 6-phosphate but with a lower catalytic efficiency (PubMed:17804405). The mechanism proceeds via the intermediate compound alpha-D-glucose 1,6-bisphosphate (PubMed:17804405). In vitro, also has a low glucose 1,6-bisphosphate synthase activity which is most probably not physiologically relevant (PubMed:17804405, PubMed:18927083).</text>
</comment>
<comment type="catalytic activity">
    <reaction evidence="4">
        <text>alpha-D-ribose 1-phosphate = D-ribose 5-phosphate</text>
        <dbReference type="Rhea" id="RHEA:18793"/>
        <dbReference type="ChEBI" id="CHEBI:57720"/>
        <dbReference type="ChEBI" id="CHEBI:78346"/>
        <dbReference type="EC" id="5.4.2.7"/>
    </reaction>
</comment>
<comment type="catalytic activity">
    <reaction evidence="4">
        <text>2-deoxy-alpha-D-ribose 1-phosphate = 2-deoxy-D-ribose 5-phosphate</text>
        <dbReference type="Rhea" id="RHEA:27658"/>
        <dbReference type="ChEBI" id="CHEBI:57259"/>
        <dbReference type="ChEBI" id="CHEBI:62877"/>
        <dbReference type="EC" id="5.4.2.7"/>
    </reaction>
</comment>
<comment type="catalytic activity">
    <reaction evidence="4">
        <text>alpha-D-glucose 1-phosphate = alpha-D-glucose 6-phosphate</text>
        <dbReference type="Rhea" id="RHEA:23536"/>
        <dbReference type="ChEBI" id="CHEBI:58225"/>
        <dbReference type="ChEBI" id="CHEBI:58601"/>
        <dbReference type="EC" id="5.4.2.2"/>
    </reaction>
</comment>
<comment type="catalytic activity">
    <reaction evidence="4">
        <text>O-phospho-L-seryl-[protein] + alpha-D-glucose 1-phosphate = alpha-D-glucose 1,6-bisphosphate + L-seryl-[protein]</text>
        <dbReference type="Rhea" id="RHEA:68748"/>
        <dbReference type="Rhea" id="RHEA-COMP:9863"/>
        <dbReference type="Rhea" id="RHEA-COMP:11604"/>
        <dbReference type="ChEBI" id="CHEBI:29999"/>
        <dbReference type="ChEBI" id="CHEBI:58392"/>
        <dbReference type="ChEBI" id="CHEBI:58601"/>
        <dbReference type="ChEBI" id="CHEBI:83421"/>
    </reaction>
</comment>
<comment type="catalytic activity">
    <reaction evidence="4">
        <text>alpha-D-glucose 1,6-bisphosphate + L-seryl-[protein] = O-phospho-L-seryl-[protein] + alpha-D-glucose 6-phosphate</text>
        <dbReference type="Rhea" id="RHEA:68752"/>
        <dbReference type="Rhea" id="RHEA-COMP:9863"/>
        <dbReference type="Rhea" id="RHEA-COMP:11604"/>
        <dbReference type="ChEBI" id="CHEBI:29999"/>
        <dbReference type="ChEBI" id="CHEBI:58225"/>
        <dbReference type="ChEBI" id="CHEBI:58392"/>
        <dbReference type="ChEBI" id="CHEBI:83421"/>
    </reaction>
</comment>
<comment type="cofactor">
    <cofactor evidence="1">
        <name>Mg(2+)</name>
        <dbReference type="ChEBI" id="CHEBI:18420"/>
    </cofactor>
    <text evidence="1">Binds 1 Mg(2+) ion per subunit.</text>
</comment>
<comment type="activity regulation">
    <text evidence="4">The phosphomutase activity is stimulated by glucose 1,6-bisphosphate.</text>
</comment>
<comment type="biophysicochemical properties">
    <kinetics>
        <KM evidence="4">45.7 uM for alpha-D-ribose 1-phosphate</KM>
        <KM evidence="4">4.1 uM for 2-deoxy-alpha-D-ribose 1-phosphate</KM>
        <KM evidence="4">114 uM for alpha-D-glucose 1-phosphate</KM>
        <Vmax evidence="4">104.3 umol/min/mg enzyme with alpha-D-ribose 1-phosphate as substrate</Vmax>
        <Vmax evidence="4">20.8 umol/min/mg enzyme with 2-deoxy-alpha-D-ribose 1-phosphate as substrate</Vmax>
        <Vmax evidence="4">22.8 umol/min/mg enzyme with alpha-D-glucose 1-phosphate as substrate</Vmax>
    </kinetics>
</comment>
<comment type="subunit">
    <text evidence="1">Monomer.</text>
</comment>
<comment type="interaction">
    <interactant intactId="EBI-4399372">
        <id>Q96G03</id>
    </interactant>
    <interactant intactId="EBI-352682">
        <id>P04792</id>
        <label>HSPB1</label>
    </interactant>
    <organismsDiffer>false</organismsDiffer>
    <experiments>2</experiments>
</comment>
<comment type="interaction">
    <interactant intactId="EBI-4399372">
        <id>Q96G03</id>
    </interactant>
    <interactant intactId="EBI-717399">
        <id>Q9BSI4</id>
        <label>TINF2</label>
    </interactant>
    <organismsDiffer>false</organismsDiffer>
    <experiments>2</experiments>
</comment>
<comment type="subcellular location">
    <subcellularLocation>
        <location evidence="4">Cytoplasm</location>
        <location evidence="4">Cytosol</location>
    </subcellularLocation>
</comment>
<comment type="alternative products">
    <event type="alternative splicing"/>
    <isoform>
        <id>Q96G03-1</id>
        <name>1</name>
        <sequence type="displayed"/>
    </isoform>
    <isoform>
        <id>Q96G03-2</id>
        <name>2</name>
        <sequence type="described" ref="VSP_056221 VSP_056222 VSP_056223 VSP_056224"/>
    </isoform>
</comment>
<comment type="similarity">
    <text evidence="8">Belongs to the phosphohexose mutase family.</text>
</comment>
<name>PGM2_HUMAN</name>
<dbReference type="EC" id="5.4.2.7" evidence="4"/>
<dbReference type="EC" id="5.4.2.2" evidence="4"/>
<dbReference type="EMBL" id="AL136705">
    <property type="protein sequence ID" value="CAB66640.1"/>
    <property type="molecule type" value="mRNA"/>
</dbReference>
<dbReference type="EMBL" id="AF109360">
    <property type="protein sequence ID" value="AAQ13508.1"/>
    <property type="molecule type" value="mRNA"/>
</dbReference>
<dbReference type="EMBL" id="AK001845">
    <property type="protein sequence ID" value="BAA91938.1"/>
    <property type="molecule type" value="mRNA"/>
</dbReference>
<dbReference type="EMBL" id="AK303374">
    <property type="protein sequence ID" value="BAG64430.1"/>
    <property type="molecule type" value="mRNA"/>
</dbReference>
<dbReference type="EMBL" id="CR457274">
    <property type="protein sequence ID" value="CAG33555.1"/>
    <property type="molecule type" value="mRNA"/>
</dbReference>
<dbReference type="EMBL" id="AK223237">
    <property type="protein sequence ID" value="BAD96957.1"/>
    <property type="molecule type" value="mRNA"/>
</dbReference>
<dbReference type="EMBL" id="AC021106">
    <property type="status" value="NOT_ANNOTATED_CDS"/>
    <property type="molecule type" value="Genomic_DNA"/>
</dbReference>
<dbReference type="EMBL" id="AC108022">
    <property type="status" value="NOT_ANNOTATED_CDS"/>
    <property type="molecule type" value="Genomic_DNA"/>
</dbReference>
<dbReference type="EMBL" id="BC010087">
    <property type="protein sequence ID" value="AAH10087.1"/>
    <property type="molecule type" value="mRNA"/>
</dbReference>
<dbReference type="CCDS" id="CCDS3443.1">
    <molecule id="Q96G03-1"/>
</dbReference>
<dbReference type="RefSeq" id="NP_060760.2">
    <molecule id="Q96G03-1"/>
    <property type="nucleotide sequence ID" value="NM_018290.4"/>
</dbReference>
<dbReference type="SMR" id="Q96G03"/>
<dbReference type="BioGRID" id="120564">
    <property type="interactions" value="52"/>
</dbReference>
<dbReference type="FunCoup" id="Q96G03">
    <property type="interactions" value="1336"/>
</dbReference>
<dbReference type="IntAct" id="Q96G03">
    <property type="interactions" value="12"/>
</dbReference>
<dbReference type="MINT" id="Q96G03"/>
<dbReference type="STRING" id="9606.ENSP00000371393"/>
<dbReference type="GlyGen" id="Q96G03">
    <property type="glycosylation" value="3 sites, 1 O-linked glycan (1 site)"/>
</dbReference>
<dbReference type="iPTMnet" id="Q96G03"/>
<dbReference type="MetOSite" id="Q96G03"/>
<dbReference type="PhosphoSitePlus" id="Q96G03"/>
<dbReference type="SwissPalm" id="Q96G03"/>
<dbReference type="BioMuta" id="PGM2"/>
<dbReference type="DMDM" id="116242708"/>
<dbReference type="jPOST" id="Q96G03"/>
<dbReference type="MassIVE" id="Q96G03"/>
<dbReference type="PaxDb" id="9606-ENSP00000371393"/>
<dbReference type="PeptideAtlas" id="Q96G03"/>
<dbReference type="ProteomicsDB" id="5672"/>
<dbReference type="ProteomicsDB" id="76580">
    <molecule id="Q96G03-1"/>
</dbReference>
<dbReference type="Pumba" id="Q96G03"/>
<dbReference type="Antibodypedia" id="23314">
    <property type="antibodies" value="105 antibodies from 25 providers"/>
</dbReference>
<dbReference type="DNASU" id="55276"/>
<dbReference type="Ensembl" id="ENST00000381967.9">
    <molecule id="Q96G03-1"/>
    <property type="protein sequence ID" value="ENSP00000371393.4"/>
    <property type="gene ID" value="ENSG00000169299.14"/>
</dbReference>
<dbReference type="GeneID" id="55276"/>
<dbReference type="KEGG" id="hsa:55276"/>
<dbReference type="MANE-Select" id="ENST00000381967.9">
    <property type="protein sequence ID" value="ENSP00000371393.4"/>
    <property type="RefSeq nucleotide sequence ID" value="NM_018290.4"/>
    <property type="RefSeq protein sequence ID" value="NP_060760.2"/>
</dbReference>
<dbReference type="UCSC" id="uc011byb.2">
    <molecule id="Q96G03-1"/>
    <property type="organism name" value="human"/>
</dbReference>
<dbReference type="AGR" id="HGNC:8906"/>
<dbReference type="CTD" id="55276"/>
<dbReference type="DisGeNET" id="55276"/>
<dbReference type="GeneCards" id="PGM2"/>
<dbReference type="HGNC" id="HGNC:8906">
    <property type="gene designation" value="PGM2"/>
</dbReference>
<dbReference type="HPA" id="ENSG00000169299">
    <property type="expression patterns" value="Low tissue specificity"/>
</dbReference>
<dbReference type="MalaCards" id="PGM2"/>
<dbReference type="MIM" id="172000">
    <property type="type" value="gene"/>
</dbReference>
<dbReference type="neXtProt" id="NX_Q96G03"/>
<dbReference type="OpenTargets" id="ENSG00000169299"/>
<dbReference type="PharmGKB" id="PA33243"/>
<dbReference type="VEuPathDB" id="HostDB:ENSG00000169299"/>
<dbReference type="eggNOG" id="KOG1220">
    <property type="taxonomic scope" value="Eukaryota"/>
</dbReference>
<dbReference type="GeneTree" id="ENSGT00940000156247"/>
<dbReference type="HOGENOM" id="CLU_016950_0_1_1"/>
<dbReference type="InParanoid" id="Q96G03"/>
<dbReference type="OMA" id="HGTSNKP"/>
<dbReference type="OrthoDB" id="8300170at2759"/>
<dbReference type="PAN-GO" id="Q96G03">
    <property type="GO annotations" value="2 GO annotations based on evolutionary models"/>
</dbReference>
<dbReference type="PhylomeDB" id="Q96G03"/>
<dbReference type="TreeFam" id="TF300692"/>
<dbReference type="BioCyc" id="MetaCyc:HS09924-MONOMER"/>
<dbReference type="PathwayCommons" id="Q96G03"/>
<dbReference type="Reactome" id="R-HSA-6798695">
    <property type="pathway name" value="Neutrophil degranulation"/>
</dbReference>
<dbReference type="Reactome" id="R-HSA-71336">
    <property type="pathway name" value="Pentose phosphate pathway"/>
</dbReference>
<dbReference type="SABIO-RK" id="Q96G03"/>
<dbReference type="SignaLink" id="Q96G03"/>
<dbReference type="SIGNOR" id="Q96G03"/>
<dbReference type="BioGRID-ORCS" id="55276">
    <property type="hits" value="9 hits in 1156 CRISPR screens"/>
</dbReference>
<dbReference type="ChiTaRS" id="PGM2">
    <property type="organism name" value="human"/>
</dbReference>
<dbReference type="GeneWiki" id="PGM2"/>
<dbReference type="GenomeRNAi" id="55276"/>
<dbReference type="Pharos" id="Q96G03">
    <property type="development level" value="Tbio"/>
</dbReference>
<dbReference type="PRO" id="PR:Q96G03"/>
<dbReference type="Proteomes" id="UP000005640">
    <property type="component" value="Chromosome 4"/>
</dbReference>
<dbReference type="RNAct" id="Q96G03">
    <property type="molecule type" value="protein"/>
</dbReference>
<dbReference type="Bgee" id="ENSG00000169299">
    <property type="expression patterns" value="Expressed in gingival epithelium and 188 other cell types or tissues"/>
</dbReference>
<dbReference type="ExpressionAtlas" id="Q96G03">
    <property type="expression patterns" value="baseline and differential"/>
</dbReference>
<dbReference type="GO" id="GO:0005829">
    <property type="term" value="C:cytosol"/>
    <property type="evidence" value="ECO:0000314"/>
    <property type="project" value="UniProtKB"/>
</dbReference>
<dbReference type="GO" id="GO:0070062">
    <property type="term" value="C:extracellular exosome"/>
    <property type="evidence" value="ECO:0007005"/>
    <property type="project" value="UniProtKB"/>
</dbReference>
<dbReference type="GO" id="GO:0005576">
    <property type="term" value="C:extracellular region"/>
    <property type="evidence" value="ECO:0000304"/>
    <property type="project" value="Reactome"/>
</dbReference>
<dbReference type="GO" id="GO:1904813">
    <property type="term" value="C:ficolin-1-rich granule lumen"/>
    <property type="evidence" value="ECO:0000304"/>
    <property type="project" value="Reactome"/>
</dbReference>
<dbReference type="GO" id="GO:0034774">
    <property type="term" value="C:secretory granule lumen"/>
    <property type="evidence" value="ECO:0000304"/>
    <property type="project" value="Reactome"/>
</dbReference>
<dbReference type="GO" id="GO:0000287">
    <property type="term" value="F:magnesium ion binding"/>
    <property type="evidence" value="ECO:0007669"/>
    <property type="project" value="InterPro"/>
</dbReference>
<dbReference type="GO" id="GO:0004614">
    <property type="term" value="F:phosphoglucomutase activity"/>
    <property type="evidence" value="ECO:0000314"/>
    <property type="project" value="UniProtKB"/>
</dbReference>
<dbReference type="GO" id="GO:0008973">
    <property type="term" value="F:phosphopentomutase activity"/>
    <property type="evidence" value="ECO:0000314"/>
    <property type="project" value="UniProtKB"/>
</dbReference>
<dbReference type="GO" id="GO:0006006">
    <property type="term" value="P:glucose metabolic process"/>
    <property type="evidence" value="ECO:0007669"/>
    <property type="project" value="UniProtKB-KW"/>
</dbReference>
<dbReference type="GO" id="GO:0005978">
    <property type="term" value="P:glycogen biosynthetic process"/>
    <property type="evidence" value="ECO:0007669"/>
    <property type="project" value="Ensembl"/>
</dbReference>
<dbReference type="GO" id="GO:0005980">
    <property type="term" value="P:glycogen catabolic process"/>
    <property type="evidence" value="ECO:0007669"/>
    <property type="project" value="Ensembl"/>
</dbReference>
<dbReference type="GO" id="GO:0006166">
    <property type="term" value="P:purine ribonucleoside salvage"/>
    <property type="evidence" value="ECO:0000318"/>
    <property type="project" value="GO_Central"/>
</dbReference>
<dbReference type="CDD" id="cd05799">
    <property type="entry name" value="PGM2"/>
    <property type="match status" value="1"/>
</dbReference>
<dbReference type="FunFam" id="3.40.120.10:FF:000016">
    <property type="entry name" value="Glucose 1,6-bisphosphate synthase"/>
    <property type="match status" value="1"/>
</dbReference>
<dbReference type="FunFam" id="3.40.120.10:FF:000017">
    <property type="entry name" value="glucose 1,6-bisphosphate synthase"/>
    <property type="match status" value="1"/>
</dbReference>
<dbReference type="FunFam" id="3.40.120.10:FF:000030">
    <property type="entry name" value="Phosphoglucomutase 2"/>
    <property type="match status" value="1"/>
</dbReference>
<dbReference type="Gene3D" id="3.40.120.10">
    <property type="entry name" value="Alpha-D-Glucose-1,6-Bisphosphate, subunit A, domain 3"/>
    <property type="match status" value="3"/>
</dbReference>
<dbReference type="InterPro" id="IPR005844">
    <property type="entry name" value="A-D-PHexomutase_a/b/a-I"/>
</dbReference>
<dbReference type="InterPro" id="IPR016055">
    <property type="entry name" value="A-D-PHexomutase_a/b/a-I/II/III"/>
</dbReference>
<dbReference type="InterPro" id="IPR005845">
    <property type="entry name" value="A-D-PHexomutase_a/b/a-II"/>
</dbReference>
<dbReference type="InterPro" id="IPR005846">
    <property type="entry name" value="A-D-PHexomutase_a/b/a-III"/>
</dbReference>
<dbReference type="InterPro" id="IPR036900">
    <property type="entry name" value="A-D-PHexomutase_C_sf"/>
</dbReference>
<dbReference type="InterPro" id="IPR016066">
    <property type="entry name" value="A-D-PHexomutase_CS"/>
</dbReference>
<dbReference type="InterPro" id="IPR005841">
    <property type="entry name" value="Alpha-D-phosphohexomutase_SF"/>
</dbReference>
<dbReference type="PANTHER" id="PTHR45745">
    <property type="entry name" value="PHOSPHOMANNOMUTASE 45A"/>
    <property type="match status" value="1"/>
</dbReference>
<dbReference type="PANTHER" id="PTHR45745:SF3">
    <property type="entry name" value="PHOSPHOPENTOMUTASE"/>
    <property type="match status" value="1"/>
</dbReference>
<dbReference type="Pfam" id="PF02878">
    <property type="entry name" value="PGM_PMM_I"/>
    <property type="match status" value="1"/>
</dbReference>
<dbReference type="Pfam" id="PF02879">
    <property type="entry name" value="PGM_PMM_II"/>
    <property type="match status" value="1"/>
</dbReference>
<dbReference type="Pfam" id="PF02880">
    <property type="entry name" value="PGM_PMM_III"/>
    <property type="match status" value="1"/>
</dbReference>
<dbReference type="PRINTS" id="PR00509">
    <property type="entry name" value="PGMPMM"/>
</dbReference>
<dbReference type="SUPFAM" id="SSF55957">
    <property type="entry name" value="Phosphoglucomutase, C-terminal domain"/>
    <property type="match status" value="1"/>
</dbReference>
<dbReference type="SUPFAM" id="SSF53738">
    <property type="entry name" value="Phosphoglucomutase, first 3 domains"/>
    <property type="match status" value="3"/>
</dbReference>
<dbReference type="PROSITE" id="PS00710">
    <property type="entry name" value="PGM_PMM"/>
    <property type="match status" value="1"/>
</dbReference>
<keyword id="KW-0007">Acetylation</keyword>
<keyword id="KW-0025">Alternative splicing</keyword>
<keyword id="KW-0119">Carbohydrate metabolism</keyword>
<keyword id="KW-0963">Cytoplasm</keyword>
<keyword id="KW-0903">Direct protein sequencing</keyword>
<keyword id="KW-0313">Glucose metabolism</keyword>
<keyword id="KW-0413">Isomerase</keyword>
<keyword id="KW-0460">Magnesium</keyword>
<keyword id="KW-0479">Metal-binding</keyword>
<keyword id="KW-0597">Phosphoprotein</keyword>
<keyword id="KW-1267">Proteomics identification</keyword>
<keyword id="KW-1185">Reference proteome</keyword>
<organism>
    <name type="scientific">Homo sapiens</name>
    <name type="common">Human</name>
    <dbReference type="NCBI Taxonomy" id="9606"/>
    <lineage>
        <taxon>Eukaryota</taxon>
        <taxon>Metazoa</taxon>
        <taxon>Chordata</taxon>
        <taxon>Craniata</taxon>
        <taxon>Vertebrata</taxon>
        <taxon>Euteleostomi</taxon>
        <taxon>Mammalia</taxon>
        <taxon>Eutheria</taxon>
        <taxon>Euarchontoglires</taxon>
        <taxon>Primates</taxon>
        <taxon>Haplorrhini</taxon>
        <taxon>Catarrhini</taxon>
        <taxon>Hominidae</taxon>
        <taxon>Homo</taxon>
    </lineage>
</organism>
<proteinExistence type="evidence at protein level"/>
<protein>
    <recommendedName>
        <fullName evidence="9">Phosphopentomutase</fullName>
        <ecNumber evidence="4">5.4.2.7</ecNumber>
    </recommendedName>
    <alternativeName>
        <fullName evidence="10">Glucose phosphomutase 2</fullName>
    </alternativeName>
    <alternativeName>
        <fullName evidence="10">Phosphodeoxyribomutase</fullName>
    </alternativeName>
    <alternativeName>
        <fullName evidence="10">Phosphoglucomutase-2</fullName>
        <ecNumber evidence="4">5.4.2.2</ecNumber>
    </alternativeName>
</protein>
<gene>
    <name evidence="12" type="primary">PGM2</name>
    <name evidence="11" type="ORF">MSTP006</name>
</gene>
<feature type="initiator methionine" description="Removed" evidence="2 14 15 16">
    <location>
        <position position="1"/>
    </location>
</feature>
<feature type="chain" id="PRO_0000147781" description="Phosphopentomutase">
    <location>
        <begin position="2"/>
        <end position="612"/>
    </location>
</feature>
<feature type="active site" description="Phosphoserine intermediate" evidence="1">
    <location>
        <position position="165"/>
    </location>
</feature>
<feature type="binding site" evidence="1">
    <location>
        <position position="63"/>
    </location>
    <ligand>
        <name>alpha-D-glucose 1,6-bisphosphate</name>
        <dbReference type="ChEBI" id="CHEBI:58392"/>
    </ligand>
</feature>
<feature type="binding site" evidence="1">
    <location>
        <position position="165"/>
    </location>
    <ligand>
        <name>alpha-D-glucose 1,6-bisphosphate</name>
        <dbReference type="ChEBI" id="CHEBI:58392"/>
    </ligand>
</feature>
<feature type="binding site" description="via phosphate group" evidence="1">
    <location>
        <position position="165"/>
    </location>
    <ligand>
        <name>Mg(2+)</name>
        <dbReference type="ChEBI" id="CHEBI:18420"/>
    </ligand>
</feature>
<feature type="binding site" evidence="1">
    <location>
        <position position="322"/>
    </location>
    <ligand>
        <name>Mg(2+)</name>
        <dbReference type="ChEBI" id="CHEBI:18420"/>
    </ligand>
</feature>
<feature type="binding site" evidence="1">
    <location>
        <position position="324"/>
    </location>
    <ligand>
        <name>Mg(2+)</name>
        <dbReference type="ChEBI" id="CHEBI:18420"/>
    </ligand>
</feature>
<feature type="binding site" evidence="1">
    <location>
        <position position="326"/>
    </location>
    <ligand>
        <name>alpha-D-glucose 1,6-bisphosphate</name>
        <dbReference type="ChEBI" id="CHEBI:58392"/>
    </ligand>
</feature>
<feature type="binding site" evidence="1">
    <location>
        <position position="326"/>
    </location>
    <ligand>
        <name>Mg(2+)</name>
        <dbReference type="ChEBI" id="CHEBI:18420"/>
    </ligand>
</feature>
<feature type="binding site" evidence="1">
    <location>
        <position position="327"/>
    </location>
    <ligand>
        <name>alpha-D-glucose 1,6-bisphosphate</name>
        <dbReference type="ChEBI" id="CHEBI:58392"/>
    </ligand>
</feature>
<feature type="binding site" evidence="1">
    <location>
        <position position="400"/>
    </location>
    <ligand>
        <name>alpha-D-glucose 1,6-bisphosphate</name>
        <dbReference type="ChEBI" id="CHEBI:58392"/>
    </ligand>
</feature>
<feature type="binding site" evidence="1">
    <location>
        <position position="424"/>
    </location>
    <ligand>
        <name>alpha-D-glucose 1,6-bisphosphate</name>
        <dbReference type="ChEBI" id="CHEBI:58392"/>
    </ligand>
</feature>
<feature type="binding site" evidence="1">
    <location>
        <position position="438"/>
    </location>
    <ligand>
        <name>alpha-D-glucose 1,6-bisphosphate</name>
        <dbReference type="ChEBI" id="CHEBI:58392"/>
    </ligand>
</feature>
<feature type="modified residue" description="N-acetylalanine" evidence="2 14 15 16">
    <location>
        <position position="2"/>
    </location>
</feature>
<feature type="modified residue" description="Phosphoserine" evidence="13 17 18">
    <location>
        <position position="165"/>
    </location>
</feature>
<feature type="splice variant" id="VSP_056221" description="In isoform 2." evidence="7">
    <original>MAAPEGSG</original>
    <variation>MSSQLILR</variation>
    <location>
        <begin position="1"/>
        <end position="8"/>
    </location>
</feature>
<feature type="splice variant" id="VSP_056222" description="In isoform 2." evidence="7">
    <location>
        <begin position="9"/>
        <end position="147"/>
    </location>
</feature>
<feature type="splice variant" id="VSP_056223" description="In isoform 2." evidence="7">
    <original>YM</original>
    <variation>KK</variation>
    <location>
        <begin position="429"/>
        <end position="430"/>
    </location>
</feature>
<feature type="splice variant" id="VSP_056224" description="In isoform 2." evidence="7">
    <location>
        <begin position="431"/>
        <end position="612"/>
    </location>
</feature>
<feature type="sequence variant" id="VAR_027968" description="In dbSNP:rs17856324." evidence="3 6">
    <original>G</original>
    <variation>D</variation>
    <location>
        <position position="10"/>
    </location>
</feature>
<feature type="sequence variant" id="VAR_027969" description="In dbSNP:rs10001580.">
    <original>E</original>
    <variation>D</variation>
    <location>
        <position position="488"/>
    </location>
</feature>
<feature type="sequence conflict" description="In Ref. 5; BAD96957." evidence="8" ref="5">
    <original>G</original>
    <variation>A</variation>
    <location>
        <position position="114"/>
    </location>
</feature>
<feature type="sequence conflict" description="In Ref. 2; BAA91938." evidence="8" ref="2">
    <original>I</original>
    <variation>V</variation>
    <location>
        <position position="162"/>
    </location>
</feature>
<feature type="sequence conflict" description="In Ref. 1; CAB66640." evidence="8" ref="1">
    <original>K</original>
    <variation>R</variation>
    <location>
        <position position="282"/>
    </location>
</feature>
<feature type="sequence conflict" description="In Ref. 5; BAD96957." evidence="8" ref="5">
    <original>E</original>
    <variation>G</variation>
    <location>
        <position position="495"/>
    </location>
</feature>
<evidence type="ECO:0000250" key="1">
    <source>
        <dbReference type="UniProtKB" id="P00949"/>
    </source>
</evidence>
<evidence type="ECO:0000269" key="2">
    <source>
    </source>
</evidence>
<evidence type="ECO:0000269" key="3">
    <source>
    </source>
</evidence>
<evidence type="ECO:0000269" key="4">
    <source>
    </source>
</evidence>
<evidence type="ECO:0000269" key="5">
    <source>
    </source>
</evidence>
<evidence type="ECO:0000269" key="6">
    <source ref="4"/>
</evidence>
<evidence type="ECO:0000303" key="7">
    <source>
    </source>
</evidence>
<evidence type="ECO:0000305" key="8"/>
<evidence type="ECO:0000305" key="9">
    <source>
    </source>
</evidence>
<evidence type="ECO:0000305" key="10">
    <source ref="2"/>
</evidence>
<evidence type="ECO:0000312" key="11">
    <source>
        <dbReference type="EMBL" id="AAQ13508.1"/>
    </source>
</evidence>
<evidence type="ECO:0000312" key="12">
    <source>
        <dbReference type="HGNC" id="HGNC:8906"/>
    </source>
</evidence>
<evidence type="ECO:0007744" key="13">
    <source>
    </source>
</evidence>
<evidence type="ECO:0007744" key="14">
    <source>
    </source>
</evidence>
<evidence type="ECO:0007744" key="15">
    <source>
    </source>
</evidence>
<evidence type="ECO:0007744" key="16">
    <source>
    </source>
</evidence>
<evidence type="ECO:0007744" key="17">
    <source>
    </source>
</evidence>
<evidence type="ECO:0007744" key="18">
    <source>
    </source>
</evidence>